<gene>
    <name evidence="1" type="primary">aroD</name>
    <name type="ordered locus">Sfum_2722</name>
</gene>
<reference key="1">
    <citation type="submission" date="2006-10" db="EMBL/GenBank/DDBJ databases">
        <title>Complete sequence of Syntrophobacter fumaroxidans MPOB.</title>
        <authorList>
            <consortium name="US DOE Joint Genome Institute"/>
            <person name="Copeland A."/>
            <person name="Lucas S."/>
            <person name="Lapidus A."/>
            <person name="Barry K."/>
            <person name="Detter J.C."/>
            <person name="Glavina del Rio T."/>
            <person name="Hammon N."/>
            <person name="Israni S."/>
            <person name="Pitluck S."/>
            <person name="Goltsman E.G."/>
            <person name="Martinez M."/>
            <person name="Schmutz J."/>
            <person name="Larimer F."/>
            <person name="Land M."/>
            <person name="Hauser L."/>
            <person name="Kyrpides N."/>
            <person name="Kim E."/>
            <person name="Boone D.R."/>
            <person name="Brockman F."/>
            <person name="Culley D."/>
            <person name="Ferry J."/>
            <person name="Gunsalus R."/>
            <person name="McInerney M.J."/>
            <person name="Morrison M."/>
            <person name="Plugge C."/>
            <person name="Rohlin L."/>
            <person name="Scholten J."/>
            <person name="Sieber J."/>
            <person name="Stams A.J.M."/>
            <person name="Worm P."/>
            <person name="Henstra A.M."/>
            <person name="Richardson P."/>
        </authorList>
    </citation>
    <scope>NUCLEOTIDE SEQUENCE [LARGE SCALE GENOMIC DNA]</scope>
    <source>
        <strain>DSM 10017 / MPOB</strain>
    </source>
</reference>
<proteinExistence type="inferred from homology"/>
<keyword id="KW-0028">Amino-acid biosynthesis</keyword>
<keyword id="KW-0057">Aromatic amino acid biosynthesis</keyword>
<keyword id="KW-0456">Lyase</keyword>
<keyword id="KW-1185">Reference proteome</keyword>
<keyword id="KW-0704">Schiff base</keyword>
<organism>
    <name type="scientific">Syntrophobacter fumaroxidans (strain DSM 10017 / MPOB)</name>
    <dbReference type="NCBI Taxonomy" id="335543"/>
    <lineage>
        <taxon>Bacteria</taxon>
        <taxon>Pseudomonadati</taxon>
        <taxon>Thermodesulfobacteriota</taxon>
        <taxon>Syntrophobacteria</taxon>
        <taxon>Syntrophobacterales</taxon>
        <taxon>Syntrophobacteraceae</taxon>
        <taxon>Syntrophobacter</taxon>
    </lineage>
</organism>
<evidence type="ECO:0000255" key="1">
    <source>
        <dbReference type="HAMAP-Rule" id="MF_00214"/>
    </source>
</evidence>
<feature type="chain" id="PRO_0000325531" description="3-dehydroquinate dehydratase">
    <location>
        <begin position="1"/>
        <end position="234"/>
    </location>
</feature>
<feature type="active site" description="Proton donor/acceptor" evidence="1">
    <location>
        <position position="124"/>
    </location>
</feature>
<feature type="active site" description="Schiff-base intermediate with substrate" evidence="1">
    <location>
        <position position="151"/>
    </location>
</feature>
<feature type="binding site" evidence="1">
    <location>
        <begin position="33"/>
        <end position="35"/>
    </location>
    <ligand>
        <name>3-dehydroquinate</name>
        <dbReference type="ChEBI" id="CHEBI:32364"/>
    </ligand>
</feature>
<feature type="binding site" evidence="1">
    <location>
        <position position="68"/>
    </location>
    <ligand>
        <name>3-dehydroquinate</name>
        <dbReference type="ChEBI" id="CHEBI:32364"/>
    </ligand>
</feature>
<feature type="binding site" evidence="1">
    <location>
        <position position="193"/>
    </location>
    <ligand>
        <name>3-dehydroquinate</name>
        <dbReference type="ChEBI" id="CHEBI:32364"/>
    </ligand>
</feature>
<feature type="binding site" evidence="1">
    <location>
        <position position="214"/>
    </location>
    <ligand>
        <name>3-dehydroquinate</name>
        <dbReference type="ChEBI" id="CHEBI:32364"/>
    </ligand>
</feature>
<feature type="binding site" evidence="1">
    <location>
        <position position="218"/>
    </location>
    <ligand>
        <name>3-dehydroquinate</name>
        <dbReference type="ChEBI" id="CHEBI:32364"/>
    </ligand>
</feature>
<name>AROD_SYNFM</name>
<dbReference type="EC" id="4.2.1.10" evidence="1"/>
<dbReference type="EMBL" id="CP000478">
    <property type="protein sequence ID" value="ABK18400.1"/>
    <property type="molecule type" value="Genomic_DNA"/>
</dbReference>
<dbReference type="RefSeq" id="WP_011699567.1">
    <property type="nucleotide sequence ID" value="NC_008554.1"/>
</dbReference>
<dbReference type="SMR" id="A0LLU8"/>
<dbReference type="FunCoup" id="A0LLU8">
    <property type="interactions" value="111"/>
</dbReference>
<dbReference type="STRING" id="335543.Sfum_2722"/>
<dbReference type="KEGG" id="sfu:Sfum_2722"/>
<dbReference type="eggNOG" id="COG0710">
    <property type="taxonomic scope" value="Bacteria"/>
</dbReference>
<dbReference type="HOGENOM" id="CLU_064444_0_0_7"/>
<dbReference type="InParanoid" id="A0LLU8"/>
<dbReference type="OrthoDB" id="9813659at2"/>
<dbReference type="UniPathway" id="UPA00053">
    <property type="reaction ID" value="UER00086"/>
</dbReference>
<dbReference type="Proteomes" id="UP000001784">
    <property type="component" value="Chromosome"/>
</dbReference>
<dbReference type="GO" id="GO:0003855">
    <property type="term" value="F:3-dehydroquinate dehydratase activity"/>
    <property type="evidence" value="ECO:0007669"/>
    <property type="project" value="UniProtKB-UniRule"/>
</dbReference>
<dbReference type="GO" id="GO:0046279">
    <property type="term" value="P:3,4-dihydroxybenzoate biosynthetic process"/>
    <property type="evidence" value="ECO:0007669"/>
    <property type="project" value="TreeGrafter"/>
</dbReference>
<dbReference type="GO" id="GO:0008652">
    <property type="term" value="P:amino acid biosynthetic process"/>
    <property type="evidence" value="ECO:0007669"/>
    <property type="project" value="UniProtKB-KW"/>
</dbReference>
<dbReference type="GO" id="GO:0009073">
    <property type="term" value="P:aromatic amino acid family biosynthetic process"/>
    <property type="evidence" value="ECO:0007669"/>
    <property type="project" value="UniProtKB-KW"/>
</dbReference>
<dbReference type="GO" id="GO:0009423">
    <property type="term" value="P:chorismate biosynthetic process"/>
    <property type="evidence" value="ECO:0007669"/>
    <property type="project" value="UniProtKB-UniRule"/>
</dbReference>
<dbReference type="CDD" id="cd00502">
    <property type="entry name" value="DHQase_I"/>
    <property type="match status" value="1"/>
</dbReference>
<dbReference type="Gene3D" id="3.20.20.70">
    <property type="entry name" value="Aldolase class I"/>
    <property type="match status" value="1"/>
</dbReference>
<dbReference type="HAMAP" id="MF_00214">
    <property type="entry name" value="AroD"/>
    <property type="match status" value="1"/>
</dbReference>
<dbReference type="InterPro" id="IPR013785">
    <property type="entry name" value="Aldolase_TIM"/>
</dbReference>
<dbReference type="InterPro" id="IPR001381">
    <property type="entry name" value="DHquinase_I"/>
</dbReference>
<dbReference type="InterPro" id="IPR050146">
    <property type="entry name" value="Type-I_3-dehydroquinase"/>
</dbReference>
<dbReference type="PANTHER" id="PTHR43699">
    <property type="entry name" value="3-DEHYDROQUINATE DEHYDRATASE"/>
    <property type="match status" value="1"/>
</dbReference>
<dbReference type="PANTHER" id="PTHR43699:SF1">
    <property type="entry name" value="3-DEHYDROQUINATE DEHYDRATASE"/>
    <property type="match status" value="1"/>
</dbReference>
<dbReference type="Pfam" id="PF01487">
    <property type="entry name" value="DHquinase_I"/>
    <property type="match status" value="1"/>
</dbReference>
<dbReference type="SUPFAM" id="SSF51569">
    <property type="entry name" value="Aldolase"/>
    <property type="match status" value="1"/>
</dbReference>
<sequence length="234" mass="25847">MSLAHSLICGCLMRESTEDTARFLEYPGIGLVEWRLDALHGIHTRNGLDEALAGLSLPGRHPVIATVRPERFRGGFRGTEEARIRALERTVRAGAEWIDLEDDLPEDVLSPFRDSAARVVISHHDFDGTPASDPLKHRVEHLATLGAHVLKIATYARTVEDNLRVLELIPFARKQFGAETIAFCMGPTGRWSRLACLLMGSPWTYVRFPELPASAPGQFTVAQMQTLLEIVGAG</sequence>
<protein>
    <recommendedName>
        <fullName evidence="1">3-dehydroquinate dehydratase</fullName>
        <shortName evidence="1">3-dehydroquinase</shortName>
        <ecNumber evidence="1">4.2.1.10</ecNumber>
    </recommendedName>
    <alternativeName>
        <fullName evidence="1">Type I DHQase</fullName>
    </alternativeName>
    <alternativeName>
        <fullName evidence="1">Type I dehydroquinase</fullName>
        <shortName evidence="1">DHQ1</shortName>
    </alternativeName>
</protein>
<comment type="function">
    <text evidence="1">Involved in the third step of the chorismate pathway, which leads to the biosynthesis of aromatic amino acids. Catalyzes the cis-dehydration of 3-dehydroquinate (DHQ) and introduces the first double bond of the aromatic ring to yield 3-dehydroshikimate.</text>
</comment>
<comment type="catalytic activity">
    <reaction evidence="1">
        <text>3-dehydroquinate = 3-dehydroshikimate + H2O</text>
        <dbReference type="Rhea" id="RHEA:21096"/>
        <dbReference type="ChEBI" id="CHEBI:15377"/>
        <dbReference type="ChEBI" id="CHEBI:16630"/>
        <dbReference type="ChEBI" id="CHEBI:32364"/>
        <dbReference type="EC" id="4.2.1.10"/>
    </reaction>
</comment>
<comment type="pathway">
    <text evidence="1">Metabolic intermediate biosynthesis; chorismate biosynthesis; chorismate from D-erythrose 4-phosphate and phosphoenolpyruvate: step 3/7.</text>
</comment>
<comment type="subunit">
    <text evidence="1">Homodimer.</text>
</comment>
<comment type="similarity">
    <text evidence="1">Belongs to the type-I 3-dehydroquinase family.</text>
</comment>
<accession>A0LLU8</accession>